<accession>Q88BX4</accession>
<comment type="function">
    <text evidence="1">Produces ATP from ADP in the presence of a proton gradient across the membrane. The catalytic sites are hosted primarily by the beta subunits.</text>
</comment>
<comment type="catalytic activity">
    <reaction evidence="1">
        <text>ATP + H2O + 4 H(+)(in) = ADP + phosphate + 5 H(+)(out)</text>
        <dbReference type="Rhea" id="RHEA:57720"/>
        <dbReference type="ChEBI" id="CHEBI:15377"/>
        <dbReference type="ChEBI" id="CHEBI:15378"/>
        <dbReference type="ChEBI" id="CHEBI:30616"/>
        <dbReference type="ChEBI" id="CHEBI:43474"/>
        <dbReference type="ChEBI" id="CHEBI:456216"/>
        <dbReference type="EC" id="7.1.2.2"/>
    </reaction>
</comment>
<comment type="subunit">
    <text evidence="1">F-type ATPases have 2 components, CF(1) - the catalytic core - and CF(0) - the membrane proton channel. CF(1) has five subunits: alpha(3), beta(3), gamma(1), delta(1), epsilon(1). CF(0) has three main subunits: a(1), b(2) and c(9-12). The alpha and beta chains form an alternating ring which encloses part of the gamma chain. CF(1) is attached to CF(0) by a central stalk formed by the gamma and epsilon chains, while a peripheral stalk is formed by the delta and b chains.</text>
</comment>
<comment type="subcellular location">
    <subcellularLocation>
        <location evidence="1">Cell inner membrane</location>
        <topology evidence="1">Peripheral membrane protein</topology>
    </subcellularLocation>
</comment>
<comment type="similarity">
    <text evidence="1">Belongs to the ATPase alpha/beta chains family.</text>
</comment>
<proteinExistence type="inferred from homology"/>
<keyword id="KW-0066">ATP synthesis</keyword>
<keyword id="KW-0067">ATP-binding</keyword>
<keyword id="KW-0997">Cell inner membrane</keyword>
<keyword id="KW-1003">Cell membrane</keyword>
<keyword id="KW-0139">CF(1)</keyword>
<keyword id="KW-0375">Hydrogen ion transport</keyword>
<keyword id="KW-0406">Ion transport</keyword>
<keyword id="KW-0472">Membrane</keyword>
<keyword id="KW-0547">Nucleotide-binding</keyword>
<keyword id="KW-1185">Reference proteome</keyword>
<keyword id="KW-1278">Translocase</keyword>
<keyword id="KW-0813">Transport</keyword>
<organism>
    <name type="scientific">Pseudomonas putida (strain ATCC 47054 / DSM 6125 / CFBP 8728 / NCIMB 11950 / KT2440)</name>
    <dbReference type="NCBI Taxonomy" id="160488"/>
    <lineage>
        <taxon>Bacteria</taxon>
        <taxon>Pseudomonadati</taxon>
        <taxon>Pseudomonadota</taxon>
        <taxon>Gammaproteobacteria</taxon>
        <taxon>Pseudomonadales</taxon>
        <taxon>Pseudomonadaceae</taxon>
        <taxon>Pseudomonas</taxon>
    </lineage>
</organism>
<dbReference type="EC" id="7.1.2.2" evidence="1"/>
<dbReference type="EMBL" id="AE015451">
    <property type="protein sequence ID" value="AAN70977.1"/>
    <property type="molecule type" value="Genomic_DNA"/>
</dbReference>
<dbReference type="RefSeq" id="NP_747513.1">
    <property type="nucleotide sequence ID" value="NC_002947.4"/>
</dbReference>
<dbReference type="RefSeq" id="WP_003253197.1">
    <property type="nucleotide sequence ID" value="NZ_CP169744.1"/>
</dbReference>
<dbReference type="SMR" id="Q88BX4"/>
<dbReference type="STRING" id="160488.PP_5413"/>
<dbReference type="PaxDb" id="160488-PP_5413"/>
<dbReference type="KEGG" id="ppu:PP_5413"/>
<dbReference type="PATRIC" id="fig|160488.4.peg.5781"/>
<dbReference type="eggNOG" id="COG0055">
    <property type="taxonomic scope" value="Bacteria"/>
</dbReference>
<dbReference type="HOGENOM" id="CLU_022398_0_2_6"/>
<dbReference type="OrthoDB" id="9801639at2"/>
<dbReference type="PhylomeDB" id="Q88BX4"/>
<dbReference type="BioCyc" id="PPUT160488:G1G01-5779-MONOMER"/>
<dbReference type="Proteomes" id="UP000000556">
    <property type="component" value="Chromosome"/>
</dbReference>
<dbReference type="GO" id="GO:0005886">
    <property type="term" value="C:plasma membrane"/>
    <property type="evidence" value="ECO:0007669"/>
    <property type="project" value="UniProtKB-SubCell"/>
</dbReference>
<dbReference type="GO" id="GO:0045259">
    <property type="term" value="C:proton-transporting ATP synthase complex"/>
    <property type="evidence" value="ECO:0007669"/>
    <property type="project" value="UniProtKB-KW"/>
</dbReference>
<dbReference type="GO" id="GO:0005524">
    <property type="term" value="F:ATP binding"/>
    <property type="evidence" value="ECO:0007669"/>
    <property type="project" value="UniProtKB-UniRule"/>
</dbReference>
<dbReference type="GO" id="GO:0016887">
    <property type="term" value="F:ATP hydrolysis activity"/>
    <property type="evidence" value="ECO:0007669"/>
    <property type="project" value="InterPro"/>
</dbReference>
<dbReference type="GO" id="GO:0046933">
    <property type="term" value="F:proton-transporting ATP synthase activity, rotational mechanism"/>
    <property type="evidence" value="ECO:0007669"/>
    <property type="project" value="UniProtKB-UniRule"/>
</dbReference>
<dbReference type="CDD" id="cd18110">
    <property type="entry name" value="ATP-synt_F1_beta_C"/>
    <property type="match status" value="1"/>
</dbReference>
<dbReference type="CDD" id="cd18115">
    <property type="entry name" value="ATP-synt_F1_beta_N"/>
    <property type="match status" value="1"/>
</dbReference>
<dbReference type="CDD" id="cd01133">
    <property type="entry name" value="F1-ATPase_beta_CD"/>
    <property type="match status" value="1"/>
</dbReference>
<dbReference type="FunFam" id="1.10.1140.10:FF:000001">
    <property type="entry name" value="ATP synthase subunit beta"/>
    <property type="match status" value="1"/>
</dbReference>
<dbReference type="FunFam" id="3.40.50.300:FF:000004">
    <property type="entry name" value="ATP synthase subunit beta"/>
    <property type="match status" value="1"/>
</dbReference>
<dbReference type="Gene3D" id="2.40.10.170">
    <property type="match status" value="1"/>
</dbReference>
<dbReference type="Gene3D" id="1.10.1140.10">
    <property type="entry name" value="Bovine Mitochondrial F1-atpase, Atp Synthase Beta Chain, Chain D, domain 3"/>
    <property type="match status" value="1"/>
</dbReference>
<dbReference type="Gene3D" id="3.40.50.300">
    <property type="entry name" value="P-loop containing nucleotide triphosphate hydrolases"/>
    <property type="match status" value="1"/>
</dbReference>
<dbReference type="HAMAP" id="MF_01347">
    <property type="entry name" value="ATP_synth_beta_bact"/>
    <property type="match status" value="1"/>
</dbReference>
<dbReference type="InterPro" id="IPR003593">
    <property type="entry name" value="AAA+_ATPase"/>
</dbReference>
<dbReference type="InterPro" id="IPR055190">
    <property type="entry name" value="ATP-synt_VA_C"/>
</dbReference>
<dbReference type="InterPro" id="IPR005722">
    <property type="entry name" value="ATP_synth_F1_bsu"/>
</dbReference>
<dbReference type="InterPro" id="IPR020003">
    <property type="entry name" value="ATPase_a/bsu_AS"/>
</dbReference>
<dbReference type="InterPro" id="IPR050053">
    <property type="entry name" value="ATPase_alpha/beta_chains"/>
</dbReference>
<dbReference type="InterPro" id="IPR004100">
    <property type="entry name" value="ATPase_F1/V1/A1_a/bsu_N"/>
</dbReference>
<dbReference type="InterPro" id="IPR036121">
    <property type="entry name" value="ATPase_F1/V1/A1_a/bsu_N_sf"/>
</dbReference>
<dbReference type="InterPro" id="IPR000194">
    <property type="entry name" value="ATPase_F1/V1/A1_a/bsu_nucl-bd"/>
</dbReference>
<dbReference type="InterPro" id="IPR024034">
    <property type="entry name" value="ATPase_F1/V1_b/a_C"/>
</dbReference>
<dbReference type="InterPro" id="IPR027417">
    <property type="entry name" value="P-loop_NTPase"/>
</dbReference>
<dbReference type="NCBIfam" id="TIGR01039">
    <property type="entry name" value="atpD"/>
    <property type="match status" value="1"/>
</dbReference>
<dbReference type="PANTHER" id="PTHR15184">
    <property type="entry name" value="ATP SYNTHASE"/>
    <property type="match status" value="1"/>
</dbReference>
<dbReference type="PANTHER" id="PTHR15184:SF71">
    <property type="entry name" value="ATP SYNTHASE SUBUNIT BETA, MITOCHONDRIAL"/>
    <property type="match status" value="1"/>
</dbReference>
<dbReference type="Pfam" id="PF00006">
    <property type="entry name" value="ATP-synt_ab"/>
    <property type="match status" value="1"/>
</dbReference>
<dbReference type="Pfam" id="PF02874">
    <property type="entry name" value="ATP-synt_ab_N"/>
    <property type="match status" value="1"/>
</dbReference>
<dbReference type="Pfam" id="PF22919">
    <property type="entry name" value="ATP-synt_VA_C"/>
    <property type="match status" value="1"/>
</dbReference>
<dbReference type="SMART" id="SM00382">
    <property type="entry name" value="AAA"/>
    <property type="match status" value="1"/>
</dbReference>
<dbReference type="SUPFAM" id="SSF47917">
    <property type="entry name" value="C-terminal domain of alpha and beta subunits of F1 ATP synthase"/>
    <property type="match status" value="1"/>
</dbReference>
<dbReference type="SUPFAM" id="SSF50615">
    <property type="entry name" value="N-terminal domain of alpha and beta subunits of F1 ATP synthase"/>
    <property type="match status" value="1"/>
</dbReference>
<dbReference type="SUPFAM" id="SSF52540">
    <property type="entry name" value="P-loop containing nucleoside triphosphate hydrolases"/>
    <property type="match status" value="1"/>
</dbReference>
<dbReference type="PROSITE" id="PS00152">
    <property type="entry name" value="ATPASE_ALPHA_BETA"/>
    <property type="match status" value="1"/>
</dbReference>
<name>ATPB_PSEPK</name>
<protein>
    <recommendedName>
        <fullName evidence="1">ATP synthase subunit beta</fullName>
        <ecNumber evidence="1">7.1.2.2</ecNumber>
    </recommendedName>
    <alternativeName>
        <fullName evidence="1">ATP synthase F1 sector subunit beta</fullName>
    </alternativeName>
    <alternativeName>
        <fullName evidence="1">F-ATPase subunit beta</fullName>
    </alternativeName>
</protein>
<reference key="1">
    <citation type="journal article" date="2002" name="Environ. Microbiol.">
        <title>Complete genome sequence and comparative analysis of the metabolically versatile Pseudomonas putida KT2440.</title>
        <authorList>
            <person name="Nelson K.E."/>
            <person name="Weinel C."/>
            <person name="Paulsen I.T."/>
            <person name="Dodson R.J."/>
            <person name="Hilbert H."/>
            <person name="Martins dos Santos V.A.P."/>
            <person name="Fouts D.E."/>
            <person name="Gill S.R."/>
            <person name="Pop M."/>
            <person name="Holmes M."/>
            <person name="Brinkac L.M."/>
            <person name="Beanan M.J."/>
            <person name="DeBoy R.T."/>
            <person name="Daugherty S.C."/>
            <person name="Kolonay J.F."/>
            <person name="Madupu R."/>
            <person name="Nelson W.C."/>
            <person name="White O."/>
            <person name="Peterson J.D."/>
            <person name="Khouri H.M."/>
            <person name="Hance I."/>
            <person name="Chris Lee P."/>
            <person name="Holtzapple E.K."/>
            <person name="Scanlan D."/>
            <person name="Tran K."/>
            <person name="Moazzez A."/>
            <person name="Utterback T.R."/>
            <person name="Rizzo M."/>
            <person name="Lee K."/>
            <person name="Kosack D."/>
            <person name="Moestl D."/>
            <person name="Wedler H."/>
            <person name="Lauber J."/>
            <person name="Stjepandic D."/>
            <person name="Hoheisel J."/>
            <person name="Straetz M."/>
            <person name="Heim S."/>
            <person name="Kiewitz C."/>
            <person name="Eisen J.A."/>
            <person name="Timmis K.N."/>
            <person name="Duesterhoeft A."/>
            <person name="Tuemmler B."/>
            <person name="Fraser C.M."/>
        </authorList>
    </citation>
    <scope>NUCLEOTIDE SEQUENCE [LARGE SCALE GENOMIC DNA]</scope>
    <source>
        <strain>ATCC 47054 / DSM 6125 / CFBP 8728 / NCIMB 11950 / KT2440</strain>
    </source>
</reference>
<gene>
    <name evidence="1" type="primary">atpD</name>
    <name type="ordered locus">PP_5413</name>
</gene>
<evidence type="ECO:0000255" key="1">
    <source>
        <dbReference type="HAMAP-Rule" id="MF_01347"/>
    </source>
</evidence>
<sequence>MSSGRIVQIIGAVIDVEFPRDVVPSVYNALKVQGAETTLEVQQQLGDGVVRTIAMGSTEGLKRGLDVVDTGAAISVPVGKATLGRIMDVLGNPIDEAGPIGEEERRGIHQPAPSFADQAGGNDLLETGIKVIDLVCPFAKGGKVGLFGGAGVGKTVNMMELIRNIAMEHSGYSVFAGVGERTREGNDFYHEMKDSNVLDKVALVYGQMNEPPGNRLRVALTGLTMAEKFRDEGNDVLLFVDNIYRYTLAGTEVSALLGRMPSAVGYQPTLAEEMGVLQERITSTKEGSITSVQAVYVPADDLTDPSPATTFAHLDATVVLSRDIASLGIYPAVDPLDSTSRQLDPNVIGNEHYETARGVQYVLQRYKELKDIIAILGMDELSEADKQLVARARKIQRFLSQPFFVAEVFTGSPGKYVSLKDTIAGFSGILKGDYDHLPEQAFYMVGSIDEAIEKAKKL</sequence>
<feature type="chain" id="PRO_0000254341" description="ATP synthase subunit beta">
    <location>
        <begin position="1"/>
        <end position="458"/>
    </location>
</feature>
<feature type="binding site" evidence="1">
    <location>
        <begin position="148"/>
        <end position="155"/>
    </location>
    <ligand>
        <name>ATP</name>
        <dbReference type="ChEBI" id="CHEBI:30616"/>
    </ligand>
</feature>